<reference key="1">
    <citation type="journal article" date="2003" name="Proc. Natl. Acad. Sci. U.S.A.">
        <title>Comparative sequencing of human and chimpanzee MHC class I regions unveils insertions/deletions as the major path to genomic divergence.</title>
        <authorList>
            <person name="Anzai T."/>
            <person name="Shiina T."/>
            <person name="Kimura N."/>
            <person name="Yanagiya K."/>
            <person name="Kohara S."/>
            <person name="Shigenari A."/>
            <person name="Yamagata T."/>
            <person name="Kulski J.K."/>
            <person name="Naruse T.K."/>
            <person name="Fujimori Y."/>
            <person name="Fukuzumi Y."/>
            <person name="Yamazaki M."/>
            <person name="Tashiro H."/>
            <person name="Iwamoto C."/>
            <person name="Umehara Y."/>
            <person name="Imanishi T."/>
            <person name="Meyer A."/>
            <person name="Ikeo K."/>
            <person name="Gojobori T."/>
            <person name="Bahram S."/>
            <person name="Inoko H."/>
        </authorList>
    </citation>
    <scope>NUCLEOTIDE SEQUENCE [LARGE SCALE GENOMIC DNA]</scope>
</reference>
<reference key="2">
    <citation type="journal article" date="2006" name="Genetics">
        <title>Rapid evolution of major histocompatibility complex class I genes in primates generates new disease alleles in humans via hitchhiking diversity.</title>
        <authorList>
            <person name="Shiina T."/>
            <person name="Ota M."/>
            <person name="Shimizu S."/>
            <person name="Katsuyama Y."/>
            <person name="Hashimoto N."/>
            <person name="Takasu M."/>
            <person name="Anzai T."/>
            <person name="Kulski J.K."/>
            <person name="Kikkawa E."/>
            <person name="Naruse T."/>
            <person name="Kimura N."/>
            <person name="Yanagiya K."/>
            <person name="Watanabe A."/>
            <person name="Hosomichi K."/>
            <person name="Kohara S."/>
            <person name="Iwamoto C."/>
            <person name="Umehara Y."/>
            <person name="Meyer A."/>
            <person name="Wanner V."/>
            <person name="Sano K."/>
            <person name="Macquin C."/>
            <person name="Ikeo K."/>
            <person name="Tokunaga K."/>
            <person name="Gojobori T."/>
            <person name="Inoko H."/>
            <person name="Bahram S."/>
        </authorList>
    </citation>
    <scope>NUCLEOTIDE SEQUENCE [LARGE SCALE GENOMIC DNA]</scope>
</reference>
<accession>Q7YR46</accession>
<accession>Q1XI11</accession>
<keyword id="KW-1185">Reference proteome</keyword>
<protein>
    <recommendedName>
        <fullName>Psoriasis susceptibility 1 candidate gene 1 protein homolog</fullName>
    </recommendedName>
    <alternativeName>
        <fullName>Protein SEEK1</fullName>
    </alternativeName>
</protein>
<proteinExistence type="predicted"/>
<evidence type="ECO:0000256" key="1">
    <source>
        <dbReference type="SAM" id="MobiDB-lite"/>
    </source>
</evidence>
<name>PS1C1_PANTR</name>
<feature type="chain" id="PRO_0000097058" description="Psoriasis susceptibility 1 candidate gene 1 protein homolog">
    <location>
        <begin position="1"/>
        <end position="152"/>
    </location>
</feature>
<feature type="region of interest" description="Disordered" evidence="1">
    <location>
        <begin position="1"/>
        <end position="39"/>
    </location>
</feature>
<feature type="region of interest" description="Disordered" evidence="1">
    <location>
        <begin position="132"/>
        <end position="152"/>
    </location>
</feature>
<feature type="compositionally biased region" description="Polar residues" evidence="1">
    <location>
        <begin position="1"/>
        <end position="31"/>
    </location>
</feature>
<dbReference type="EMBL" id="BA000041">
    <property type="protein sequence ID" value="BAC78168.1"/>
    <property type="molecule type" value="Genomic_DNA"/>
</dbReference>
<dbReference type="EMBL" id="AB210147">
    <property type="protein sequence ID" value="BAE92755.1"/>
    <property type="molecule type" value="Genomic_DNA"/>
</dbReference>
<dbReference type="EMBL" id="AB210148">
    <property type="protein sequence ID" value="BAE92759.1"/>
    <property type="molecule type" value="Genomic_DNA"/>
</dbReference>
<dbReference type="RefSeq" id="NP_001121612.1">
    <property type="nucleotide sequence ID" value="NM_001128140.1"/>
</dbReference>
<dbReference type="STRING" id="9598.ENSPTRP00000058415"/>
<dbReference type="PaxDb" id="9598-ENSPTRP00000058415"/>
<dbReference type="GeneID" id="100169686"/>
<dbReference type="KEGG" id="ptr:100169686"/>
<dbReference type="CTD" id="170679"/>
<dbReference type="eggNOG" id="ENOG502TE6A">
    <property type="taxonomic scope" value="Eukaryota"/>
</dbReference>
<dbReference type="InParanoid" id="Q7YR46"/>
<dbReference type="OrthoDB" id="15432at9604"/>
<dbReference type="Proteomes" id="UP000002277">
    <property type="component" value="Unplaced"/>
</dbReference>
<dbReference type="InterPro" id="IPR028206">
    <property type="entry name" value="SEEK1"/>
</dbReference>
<dbReference type="Pfam" id="PF15357">
    <property type="entry name" value="SEEK1"/>
    <property type="match status" value="1"/>
</dbReference>
<sequence length="152" mass="16633">MTCTDQKSHSQRALGTQTPALQGPQLLNTDPSSEETRPPHVYPDRLCHMEPANHFWHAGDLQAMTSKEFHLAATQDDCRKGRTQEDILVPSSHPELFSSVLPMALEEAARLQQPQPLPPPSGIHLSASRTSAPTLLYSPPPSHSPFGLSSLI</sequence>
<gene>
    <name type="primary">PSORS1C1</name>
    <name type="synonym">SEEK1</name>
</gene>
<organism>
    <name type="scientific">Pan troglodytes</name>
    <name type="common">Chimpanzee</name>
    <dbReference type="NCBI Taxonomy" id="9598"/>
    <lineage>
        <taxon>Eukaryota</taxon>
        <taxon>Metazoa</taxon>
        <taxon>Chordata</taxon>
        <taxon>Craniata</taxon>
        <taxon>Vertebrata</taxon>
        <taxon>Euteleostomi</taxon>
        <taxon>Mammalia</taxon>
        <taxon>Eutheria</taxon>
        <taxon>Euarchontoglires</taxon>
        <taxon>Primates</taxon>
        <taxon>Haplorrhini</taxon>
        <taxon>Catarrhini</taxon>
        <taxon>Hominidae</taxon>
        <taxon>Pan</taxon>
    </lineage>
</organism>